<sequence length="241" mass="26832">MLSFNPRLQPATLIKRYKRFLADIVTPAGEVLTIHCANTGAMTGCATPGDAVWYSTSDNPKRKYPHSWELTQTQIGDWICVNTLRANELASLAIDNNQIVELSGYTSVKREIKYGDENSRIDLLLQAENRSNCYIEVKSVTLLQQQCGYFPDAVTLRGQKHLRELQSMVANGHRAVLFFAVLHTGIRQVAAARHIDNRYAELLAQAQQAGVEVICYGFQLSPDGIALDARLPLLLDETPNS</sequence>
<evidence type="ECO:0000255" key="1">
    <source>
        <dbReference type="HAMAP-Rule" id="MF_00095"/>
    </source>
</evidence>
<organism>
    <name type="scientific">Yersinia enterocolitica serotype O:8 / biotype 1B (strain NCTC 13174 / 8081)</name>
    <dbReference type="NCBI Taxonomy" id="393305"/>
    <lineage>
        <taxon>Bacteria</taxon>
        <taxon>Pseudomonadati</taxon>
        <taxon>Pseudomonadota</taxon>
        <taxon>Gammaproteobacteria</taxon>
        <taxon>Enterobacterales</taxon>
        <taxon>Yersiniaceae</taxon>
        <taxon>Yersinia</taxon>
    </lineage>
</organism>
<name>SFSA_YERE8</name>
<accession>A1JJP3</accession>
<reference key="1">
    <citation type="journal article" date="2006" name="PLoS Genet.">
        <title>The complete genome sequence and comparative genome analysis of the high pathogenicity Yersinia enterocolitica strain 8081.</title>
        <authorList>
            <person name="Thomson N.R."/>
            <person name="Howard S."/>
            <person name="Wren B.W."/>
            <person name="Holden M.T.G."/>
            <person name="Crossman L."/>
            <person name="Challis G.L."/>
            <person name="Churcher C."/>
            <person name="Mungall K."/>
            <person name="Brooks K."/>
            <person name="Chillingworth T."/>
            <person name="Feltwell T."/>
            <person name="Abdellah Z."/>
            <person name="Hauser H."/>
            <person name="Jagels K."/>
            <person name="Maddison M."/>
            <person name="Moule S."/>
            <person name="Sanders M."/>
            <person name="Whitehead S."/>
            <person name="Quail M.A."/>
            <person name="Dougan G."/>
            <person name="Parkhill J."/>
            <person name="Prentice M.B."/>
        </authorList>
    </citation>
    <scope>NUCLEOTIDE SEQUENCE [LARGE SCALE GENOMIC DNA]</scope>
    <source>
        <strain>NCTC 13174 / 8081</strain>
    </source>
</reference>
<dbReference type="EMBL" id="AM286415">
    <property type="protein sequence ID" value="CAL10830.1"/>
    <property type="molecule type" value="Genomic_DNA"/>
</dbReference>
<dbReference type="RefSeq" id="YP_001005070.1">
    <property type="nucleotide sequence ID" value="NC_008800.1"/>
</dbReference>
<dbReference type="SMR" id="A1JJP3"/>
<dbReference type="KEGG" id="yen:YE0726"/>
<dbReference type="PATRIC" id="fig|393305.7.peg.819"/>
<dbReference type="eggNOG" id="COG1489">
    <property type="taxonomic scope" value="Bacteria"/>
</dbReference>
<dbReference type="HOGENOM" id="CLU_052299_2_0_6"/>
<dbReference type="OrthoDB" id="9802365at2"/>
<dbReference type="Proteomes" id="UP000000642">
    <property type="component" value="Chromosome"/>
</dbReference>
<dbReference type="GO" id="GO:0003677">
    <property type="term" value="F:DNA binding"/>
    <property type="evidence" value="ECO:0007669"/>
    <property type="project" value="InterPro"/>
</dbReference>
<dbReference type="CDD" id="cd22359">
    <property type="entry name" value="SfsA-like_bacterial"/>
    <property type="match status" value="1"/>
</dbReference>
<dbReference type="FunFam" id="2.40.50.580:FF:000001">
    <property type="entry name" value="Sugar fermentation stimulation protein A"/>
    <property type="match status" value="1"/>
</dbReference>
<dbReference type="FunFam" id="3.40.1350.60:FF:000001">
    <property type="entry name" value="Sugar fermentation stimulation protein A"/>
    <property type="match status" value="1"/>
</dbReference>
<dbReference type="Gene3D" id="2.40.50.580">
    <property type="match status" value="1"/>
</dbReference>
<dbReference type="Gene3D" id="3.40.1350.60">
    <property type="match status" value="1"/>
</dbReference>
<dbReference type="HAMAP" id="MF_00095">
    <property type="entry name" value="SfsA"/>
    <property type="match status" value="1"/>
</dbReference>
<dbReference type="InterPro" id="IPR005224">
    <property type="entry name" value="SfsA"/>
</dbReference>
<dbReference type="InterPro" id="IPR040452">
    <property type="entry name" value="SfsA_C"/>
</dbReference>
<dbReference type="InterPro" id="IPR041465">
    <property type="entry name" value="SfsA_N"/>
</dbReference>
<dbReference type="NCBIfam" id="TIGR00230">
    <property type="entry name" value="sfsA"/>
    <property type="match status" value="1"/>
</dbReference>
<dbReference type="PANTHER" id="PTHR30545">
    <property type="entry name" value="SUGAR FERMENTATION STIMULATION PROTEIN A"/>
    <property type="match status" value="1"/>
</dbReference>
<dbReference type="PANTHER" id="PTHR30545:SF2">
    <property type="entry name" value="SUGAR FERMENTATION STIMULATION PROTEIN A"/>
    <property type="match status" value="1"/>
</dbReference>
<dbReference type="Pfam" id="PF03749">
    <property type="entry name" value="SfsA"/>
    <property type="match status" value="1"/>
</dbReference>
<dbReference type="Pfam" id="PF17746">
    <property type="entry name" value="SfsA_N"/>
    <property type="match status" value="1"/>
</dbReference>
<gene>
    <name evidence="1" type="primary">sfsA</name>
    <name type="ordered locus">YE0726</name>
</gene>
<proteinExistence type="inferred from homology"/>
<comment type="similarity">
    <text evidence="1">Belongs to the SfsA family.</text>
</comment>
<feature type="chain" id="PRO_1000008044" description="Sugar fermentation stimulation protein homolog">
    <location>
        <begin position="1"/>
        <end position="241"/>
    </location>
</feature>
<protein>
    <recommendedName>
        <fullName evidence="1">Sugar fermentation stimulation protein homolog</fullName>
    </recommendedName>
</protein>